<reference key="1">
    <citation type="journal article" date="2000" name="Nature">
        <title>The genome sequence of the thermoacidophilic scavenger Thermoplasma acidophilum.</title>
        <authorList>
            <person name="Ruepp A."/>
            <person name="Graml W."/>
            <person name="Santos-Martinez M.-L."/>
            <person name="Koretke K.K."/>
            <person name="Volker C."/>
            <person name="Mewes H.-W."/>
            <person name="Frishman D."/>
            <person name="Stocker S."/>
            <person name="Lupas A.N."/>
            <person name="Baumeister W."/>
        </authorList>
    </citation>
    <scope>NUCLEOTIDE SEQUENCE [LARGE SCALE GENOMIC DNA]</scope>
    <source>
        <strain>ATCC 25905 / DSM 1728 / JCM 9062 / NBRC 15155 / AMRC-C165</strain>
    </source>
</reference>
<accession>P57677</accession>
<dbReference type="EC" id="6.1.1.6"/>
<dbReference type="EMBL" id="AL445066">
    <property type="protein sequence ID" value="CAC12288.1"/>
    <property type="molecule type" value="Genomic_DNA"/>
</dbReference>
<dbReference type="RefSeq" id="WP_010901570.1">
    <property type="nucleotide sequence ID" value="NC_002578.1"/>
</dbReference>
<dbReference type="SMR" id="P57677"/>
<dbReference type="STRING" id="273075.gene:9572384"/>
<dbReference type="PaxDb" id="273075-Ta1163"/>
<dbReference type="EnsemblBacteria" id="CAC12288">
    <property type="protein sequence ID" value="CAC12288"/>
    <property type="gene ID" value="CAC12288"/>
</dbReference>
<dbReference type="KEGG" id="tac:Ta1163"/>
<dbReference type="eggNOG" id="arCOG00485">
    <property type="taxonomic scope" value="Archaea"/>
</dbReference>
<dbReference type="HOGENOM" id="CLU_025562_1_0_2"/>
<dbReference type="InParanoid" id="P57677"/>
<dbReference type="OrthoDB" id="6838at2157"/>
<dbReference type="Proteomes" id="UP000001024">
    <property type="component" value="Chromosome"/>
</dbReference>
<dbReference type="GO" id="GO:0005737">
    <property type="term" value="C:cytoplasm"/>
    <property type="evidence" value="ECO:0007669"/>
    <property type="project" value="UniProtKB-SubCell"/>
</dbReference>
<dbReference type="GO" id="GO:0005524">
    <property type="term" value="F:ATP binding"/>
    <property type="evidence" value="ECO:0007669"/>
    <property type="project" value="UniProtKB-UniRule"/>
</dbReference>
<dbReference type="GO" id="GO:0004824">
    <property type="term" value="F:lysine-tRNA ligase activity"/>
    <property type="evidence" value="ECO:0007669"/>
    <property type="project" value="UniProtKB-UniRule"/>
</dbReference>
<dbReference type="GO" id="GO:0000049">
    <property type="term" value="F:tRNA binding"/>
    <property type="evidence" value="ECO:0007669"/>
    <property type="project" value="InterPro"/>
</dbReference>
<dbReference type="GO" id="GO:0006430">
    <property type="term" value="P:lysyl-tRNA aminoacylation"/>
    <property type="evidence" value="ECO:0007669"/>
    <property type="project" value="UniProtKB-UniRule"/>
</dbReference>
<dbReference type="Gene3D" id="1.10.10.350">
    <property type="match status" value="1"/>
</dbReference>
<dbReference type="Gene3D" id="1.10.10.770">
    <property type="match status" value="1"/>
</dbReference>
<dbReference type="Gene3D" id="3.40.50.620">
    <property type="entry name" value="HUPs"/>
    <property type="match status" value="2"/>
</dbReference>
<dbReference type="HAMAP" id="MF_00177">
    <property type="entry name" value="Lys_tRNA_synth_class1"/>
    <property type="match status" value="1"/>
</dbReference>
<dbReference type="InterPro" id="IPR045462">
    <property type="entry name" value="aa-tRNA-synth_I_cd-bd"/>
</dbReference>
<dbReference type="InterPro" id="IPR020751">
    <property type="entry name" value="aa-tRNA-synth_I_codon-bd_sub2"/>
</dbReference>
<dbReference type="InterPro" id="IPR001412">
    <property type="entry name" value="aa-tRNA-synth_I_CS"/>
</dbReference>
<dbReference type="InterPro" id="IPR008925">
    <property type="entry name" value="aa_tRNA-synth_I_cd-bd_sf"/>
</dbReference>
<dbReference type="InterPro" id="IPR002904">
    <property type="entry name" value="Lys-tRNA-ligase"/>
</dbReference>
<dbReference type="InterPro" id="IPR014729">
    <property type="entry name" value="Rossmann-like_a/b/a_fold"/>
</dbReference>
<dbReference type="NCBIfam" id="TIGR00467">
    <property type="entry name" value="lysS_arch"/>
    <property type="match status" value="1"/>
</dbReference>
<dbReference type="PANTHER" id="PTHR37940">
    <property type="entry name" value="LYSINE--TRNA LIGASE"/>
    <property type="match status" value="1"/>
</dbReference>
<dbReference type="PANTHER" id="PTHR37940:SF1">
    <property type="entry name" value="LYSINE--TRNA LIGASE"/>
    <property type="match status" value="1"/>
</dbReference>
<dbReference type="Pfam" id="PF19269">
    <property type="entry name" value="Anticodon_2"/>
    <property type="match status" value="1"/>
</dbReference>
<dbReference type="Pfam" id="PF01921">
    <property type="entry name" value="tRNA-synt_1f"/>
    <property type="match status" value="1"/>
</dbReference>
<dbReference type="SUPFAM" id="SSF48163">
    <property type="entry name" value="An anticodon-binding domain of class I aminoacyl-tRNA synthetases"/>
    <property type="match status" value="1"/>
</dbReference>
<dbReference type="SUPFAM" id="SSF52374">
    <property type="entry name" value="Nucleotidylyl transferase"/>
    <property type="match status" value="1"/>
</dbReference>
<dbReference type="PROSITE" id="PS00178">
    <property type="entry name" value="AA_TRNA_LIGASE_I"/>
    <property type="match status" value="1"/>
</dbReference>
<organism>
    <name type="scientific">Thermoplasma acidophilum (strain ATCC 25905 / DSM 1728 / JCM 9062 / NBRC 15155 / AMRC-C165)</name>
    <dbReference type="NCBI Taxonomy" id="273075"/>
    <lineage>
        <taxon>Archaea</taxon>
        <taxon>Methanobacteriati</taxon>
        <taxon>Thermoplasmatota</taxon>
        <taxon>Thermoplasmata</taxon>
        <taxon>Thermoplasmatales</taxon>
        <taxon>Thermoplasmataceae</taxon>
        <taxon>Thermoplasma</taxon>
    </lineage>
</organism>
<gene>
    <name type="primary">lysS</name>
    <name type="ordered locus">Ta1163</name>
</gene>
<sequence>MISLFWADALVKDLSGPQRVSTGISPSGPIHVGNMREILTGDILFKAITKRGLESDFIYLCDDMDPLRKVYPFLSKDYERYVGQPLKNIPAPQGAGKYSDYYLEPFVRVMKEANIPARVIKTSDLYESGMLAQACDIAINNREKIKDILETVSGRKIEGDFYPYEPLCEKCGRISTTHVISYSYPYAEYACKCGHHGFADIRKAEGKMPWRVEWPAKWFALKVTVEPFGKDHGAPGGSYDTGRRIAREVFGIEPPVPLMYERIILKGKGAMHSSTGLAIAASEIMEVIPPDLLRYMIARVNPGRHIDFDPGMGILALSDELEKLQDAYFENRASLDEDQAAMVEYSLVNKDRKPYPVDFRHLVTLVQIYRTEDEILRAVKKGQPSDFIEADFRKEIEYARRWLERYAPESVKFRILPVDQKIELSDSDLAILSDFLNGIEDMPWNSESIHDRIYEISQKFKTNPESVFTLFYRVFIGKDRGPRLGYFLFNLGKDFVRERIRNVIRDH</sequence>
<proteinExistence type="inferred from homology"/>
<keyword id="KW-0030">Aminoacyl-tRNA synthetase</keyword>
<keyword id="KW-0067">ATP-binding</keyword>
<keyword id="KW-0963">Cytoplasm</keyword>
<keyword id="KW-0436">Ligase</keyword>
<keyword id="KW-0547">Nucleotide-binding</keyword>
<keyword id="KW-0648">Protein biosynthesis</keyword>
<keyword id="KW-1185">Reference proteome</keyword>
<protein>
    <recommendedName>
        <fullName>Lysine--tRNA ligase</fullName>
        <ecNumber>6.1.1.6</ecNumber>
    </recommendedName>
    <alternativeName>
        <fullName>Lysyl-tRNA synthetase</fullName>
        <shortName>LysRS</shortName>
    </alternativeName>
</protein>
<comment type="catalytic activity">
    <reaction>
        <text>tRNA(Lys) + L-lysine + ATP = L-lysyl-tRNA(Lys) + AMP + diphosphate</text>
        <dbReference type="Rhea" id="RHEA:20792"/>
        <dbReference type="Rhea" id="RHEA-COMP:9696"/>
        <dbReference type="Rhea" id="RHEA-COMP:9697"/>
        <dbReference type="ChEBI" id="CHEBI:30616"/>
        <dbReference type="ChEBI" id="CHEBI:32551"/>
        <dbReference type="ChEBI" id="CHEBI:33019"/>
        <dbReference type="ChEBI" id="CHEBI:78442"/>
        <dbReference type="ChEBI" id="CHEBI:78529"/>
        <dbReference type="ChEBI" id="CHEBI:456215"/>
        <dbReference type="EC" id="6.1.1.6"/>
    </reaction>
</comment>
<comment type="subcellular location">
    <subcellularLocation>
        <location evidence="1">Cytoplasm</location>
    </subcellularLocation>
</comment>
<comment type="similarity">
    <text evidence="2">Belongs to the class-I aminoacyl-tRNA synthetase family.</text>
</comment>
<feature type="chain" id="PRO_0000152762" description="Lysine--tRNA ligase">
    <location>
        <begin position="1"/>
        <end position="507"/>
    </location>
</feature>
<feature type="short sequence motif" description="'HIGH' region">
    <location>
        <begin position="26"/>
        <end position="34"/>
    </location>
</feature>
<feature type="short sequence motif" description="'KMSKS' region">
    <location>
        <begin position="270"/>
        <end position="274"/>
    </location>
</feature>
<evidence type="ECO:0000250" key="1"/>
<evidence type="ECO:0000305" key="2"/>
<name>SYK_THEAC</name>